<proteinExistence type="inferred from homology"/>
<organism>
    <name type="scientific">Coturnix japonica</name>
    <name type="common">Japanese quail</name>
    <name type="synonym">Coturnix coturnix japonica</name>
    <dbReference type="NCBI Taxonomy" id="93934"/>
    <lineage>
        <taxon>Eukaryota</taxon>
        <taxon>Metazoa</taxon>
        <taxon>Chordata</taxon>
        <taxon>Craniata</taxon>
        <taxon>Vertebrata</taxon>
        <taxon>Euteleostomi</taxon>
        <taxon>Archelosauria</taxon>
        <taxon>Archosauria</taxon>
        <taxon>Dinosauria</taxon>
        <taxon>Saurischia</taxon>
        <taxon>Theropoda</taxon>
        <taxon>Coelurosauria</taxon>
        <taxon>Aves</taxon>
        <taxon>Neognathae</taxon>
        <taxon>Galloanserae</taxon>
        <taxon>Galliformes</taxon>
        <taxon>Phasianidae</taxon>
        <taxon>Perdicinae</taxon>
        <taxon>Coturnix</taxon>
    </lineage>
</organism>
<evidence type="ECO:0000250" key="1">
    <source>
        <dbReference type="UniProtKB" id="P00395"/>
    </source>
</evidence>
<evidence type="ECO:0000250" key="2">
    <source>
        <dbReference type="UniProtKB" id="P00396"/>
    </source>
</evidence>
<evidence type="ECO:0000250" key="3">
    <source>
        <dbReference type="UniProtKB" id="P00401"/>
    </source>
</evidence>
<evidence type="ECO:0000305" key="4"/>
<geneLocation type="mitochondrion"/>
<feature type="chain" id="PRO_0000183316" description="Cytochrome c oxidase subunit 1">
    <location>
        <begin position="1"/>
        <end position="516"/>
    </location>
</feature>
<feature type="topological domain" description="Mitochondrial matrix" evidence="2">
    <location>
        <begin position="1"/>
        <end position="12"/>
    </location>
</feature>
<feature type="transmembrane region" description="Helical; Name=I" evidence="2">
    <location>
        <begin position="13"/>
        <end position="41"/>
    </location>
</feature>
<feature type="topological domain" description="Mitochondrial intermembrane" evidence="2">
    <location>
        <begin position="42"/>
        <end position="51"/>
    </location>
</feature>
<feature type="transmembrane region" description="Helical; Name=II" evidence="2">
    <location>
        <begin position="52"/>
        <end position="87"/>
    </location>
</feature>
<feature type="topological domain" description="Mitochondrial matrix" evidence="2">
    <location>
        <begin position="88"/>
        <end position="95"/>
    </location>
</feature>
<feature type="transmembrane region" description="Helical; Name=III" evidence="2">
    <location>
        <begin position="96"/>
        <end position="118"/>
    </location>
</feature>
<feature type="topological domain" description="Mitochondrial intermembrane" evidence="2">
    <location>
        <begin position="119"/>
        <end position="141"/>
    </location>
</feature>
<feature type="transmembrane region" description="Helical; Name=IV" evidence="2">
    <location>
        <begin position="142"/>
        <end position="171"/>
    </location>
</feature>
<feature type="topological domain" description="Mitochondrial matrix" evidence="2">
    <location>
        <begin position="172"/>
        <end position="183"/>
    </location>
</feature>
<feature type="transmembrane region" description="Helical; Name=V" evidence="2">
    <location>
        <begin position="184"/>
        <end position="213"/>
    </location>
</feature>
<feature type="topological domain" description="Mitochondrial intermembrane" evidence="2">
    <location>
        <begin position="214"/>
        <end position="228"/>
    </location>
</feature>
<feature type="transmembrane region" description="Helical; Name=VI" evidence="2">
    <location>
        <begin position="229"/>
        <end position="262"/>
    </location>
</feature>
<feature type="topological domain" description="Mitochondrial matrix" evidence="2">
    <location>
        <begin position="263"/>
        <end position="270"/>
    </location>
</feature>
<feature type="transmembrane region" description="Helical; Name=VII" evidence="2">
    <location>
        <begin position="271"/>
        <end position="287"/>
    </location>
</feature>
<feature type="topological domain" description="Mitochondrial intermembrane" evidence="2">
    <location>
        <begin position="288"/>
        <end position="299"/>
    </location>
</feature>
<feature type="transmembrane region" description="Helical; Name=VIII" evidence="2">
    <location>
        <begin position="300"/>
        <end position="328"/>
    </location>
</feature>
<feature type="topological domain" description="Mitochondrial matrix" evidence="2">
    <location>
        <begin position="329"/>
        <end position="336"/>
    </location>
</feature>
<feature type="transmembrane region" description="Helical; Name=IX" evidence="2">
    <location>
        <begin position="337"/>
        <end position="358"/>
    </location>
</feature>
<feature type="topological domain" description="Mitochondrial intermembrane" evidence="2">
    <location>
        <begin position="359"/>
        <end position="371"/>
    </location>
</feature>
<feature type="transmembrane region" description="Helical; Name=X" evidence="2">
    <location>
        <begin position="372"/>
        <end position="401"/>
    </location>
</feature>
<feature type="topological domain" description="Mitochondrial matrix" evidence="2">
    <location>
        <begin position="402"/>
        <end position="407"/>
    </location>
</feature>
<feature type="transmembrane region" description="Helical; Name=XI" evidence="2">
    <location>
        <begin position="408"/>
        <end position="434"/>
    </location>
</feature>
<feature type="topological domain" description="Mitochondrial intermembrane" evidence="2">
    <location>
        <begin position="435"/>
        <end position="447"/>
    </location>
</feature>
<feature type="transmembrane region" description="Helical; Name=XII" evidence="2">
    <location>
        <begin position="448"/>
        <end position="479"/>
    </location>
</feature>
<feature type="topological domain" description="Mitochondrial matrix" evidence="2">
    <location>
        <begin position="480"/>
        <end position="516"/>
    </location>
</feature>
<feature type="binding site" evidence="2">
    <location>
        <position position="41"/>
    </location>
    <ligand>
        <name>Na(+)</name>
        <dbReference type="ChEBI" id="CHEBI:29101"/>
    </ligand>
</feature>
<feature type="binding site" evidence="2">
    <location>
        <position position="46"/>
    </location>
    <ligand>
        <name>Na(+)</name>
        <dbReference type="ChEBI" id="CHEBI:29101"/>
    </ligand>
</feature>
<feature type="binding site" description="axial binding residue" evidence="2">
    <location>
        <position position="62"/>
    </location>
    <ligand>
        <name>Fe(II)-heme a</name>
        <dbReference type="ChEBI" id="CHEBI:61715"/>
        <note>low-spin</note>
    </ligand>
    <ligandPart>
        <name>Fe</name>
        <dbReference type="ChEBI" id="CHEBI:18248"/>
    </ligandPart>
</feature>
<feature type="binding site" evidence="2">
    <location>
        <position position="241"/>
    </location>
    <ligand>
        <name>Cu cation</name>
        <dbReference type="ChEBI" id="CHEBI:23378"/>
        <label>B</label>
    </ligand>
</feature>
<feature type="binding site" evidence="2">
    <location>
        <position position="245"/>
    </location>
    <ligand>
        <name>O2</name>
        <dbReference type="ChEBI" id="CHEBI:15379"/>
    </ligand>
</feature>
<feature type="binding site" evidence="2">
    <location>
        <position position="291"/>
    </location>
    <ligand>
        <name>Cu cation</name>
        <dbReference type="ChEBI" id="CHEBI:23378"/>
        <label>B</label>
    </ligand>
</feature>
<feature type="binding site" evidence="2">
    <location>
        <position position="292"/>
    </location>
    <ligand>
        <name>Cu cation</name>
        <dbReference type="ChEBI" id="CHEBI:23378"/>
        <label>B</label>
    </ligand>
</feature>
<feature type="binding site" evidence="2">
    <location>
        <position position="369"/>
    </location>
    <ligand>
        <name>Mg(2+)</name>
        <dbReference type="ChEBI" id="CHEBI:18420"/>
        <note>ligand shared with MT-CO2</note>
    </ligand>
</feature>
<feature type="binding site" evidence="2">
    <location>
        <position position="370"/>
    </location>
    <ligand>
        <name>Mg(2+)</name>
        <dbReference type="ChEBI" id="CHEBI:18420"/>
        <note>ligand shared with MT-CO2</note>
    </ligand>
</feature>
<feature type="binding site" description="axial binding residue" evidence="2">
    <location>
        <position position="377"/>
    </location>
    <ligand>
        <name>heme a3</name>
        <dbReference type="ChEBI" id="CHEBI:83282"/>
        <note>high-spin</note>
    </ligand>
    <ligandPart>
        <name>Fe</name>
        <dbReference type="ChEBI" id="CHEBI:18248"/>
    </ligandPart>
</feature>
<feature type="binding site" description="axial binding residue" evidence="2">
    <location>
        <position position="379"/>
    </location>
    <ligand>
        <name>Fe(II)-heme a</name>
        <dbReference type="ChEBI" id="CHEBI:61715"/>
        <note>low-spin</note>
    </ligand>
    <ligandPart>
        <name>Fe</name>
        <dbReference type="ChEBI" id="CHEBI:18248"/>
    </ligandPart>
</feature>
<feature type="binding site" evidence="2">
    <location>
        <position position="442"/>
    </location>
    <ligand>
        <name>Na(+)</name>
        <dbReference type="ChEBI" id="CHEBI:29101"/>
    </ligand>
</feature>
<feature type="cross-link" description="1'-histidyl-3'-tyrosine (His-Tyr)" evidence="2">
    <location>
        <begin position="241"/>
        <end position="245"/>
    </location>
</feature>
<feature type="sequence conflict" description="In Ref. 3; AAA76729." evidence="4" ref="3">
    <original>W</original>
    <variation>L</variation>
    <location>
        <position position="474"/>
    </location>
</feature>
<dbReference type="EC" id="7.1.1.9"/>
<dbReference type="EMBL" id="AP003195">
    <property type="protein sequence ID" value="BAB62917.1"/>
    <property type="molecule type" value="Genomic_DNA"/>
</dbReference>
<dbReference type="EMBL" id="X57246">
    <property type="protein sequence ID" value="CAA40524.1"/>
    <property type="molecule type" value="Genomic_DNA"/>
</dbReference>
<dbReference type="EMBL" id="U36794">
    <property type="protein sequence ID" value="AAA76729.1"/>
    <property type="molecule type" value="Genomic_DNA"/>
</dbReference>
<dbReference type="PIR" id="S25424">
    <property type="entry name" value="S25424"/>
</dbReference>
<dbReference type="SMR" id="P24984"/>
<dbReference type="Ensembl" id="ENSCJPT00005000017.1">
    <property type="protein sequence ID" value="ENSCJPP00005000004.1"/>
    <property type="gene ID" value="ENSCJPG00005000017.1"/>
</dbReference>
<dbReference type="KEGG" id="cjo:804670"/>
<dbReference type="CTD" id="4512"/>
<dbReference type="GeneTree" id="ENSGT00390000001518"/>
<dbReference type="OrthoDB" id="10002679at2759"/>
<dbReference type="UniPathway" id="UPA00705"/>
<dbReference type="Proteomes" id="UP000694412">
    <property type="component" value="Unassembled WGS sequence"/>
</dbReference>
<dbReference type="GO" id="GO:0005743">
    <property type="term" value="C:mitochondrial inner membrane"/>
    <property type="evidence" value="ECO:0007669"/>
    <property type="project" value="UniProtKB-SubCell"/>
</dbReference>
<dbReference type="GO" id="GO:0045277">
    <property type="term" value="C:respiratory chain complex IV"/>
    <property type="evidence" value="ECO:0000250"/>
    <property type="project" value="UniProtKB"/>
</dbReference>
<dbReference type="GO" id="GO:0004129">
    <property type="term" value="F:cytochrome-c oxidase activity"/>
    <property type="evidence" value="ECO:0007669"/>
    <property type="project" value="UniProtKB-EC"/>
</dbReference>
<dbReference type="GO" id="GO:0020037">
    <property type="term" value="F:heme binding"/>
    <property type="evidence" value="ECO:0007669"/>
    <property type="project" value="InterPro"/>
</dbReference>
<dbReference type="GO" id="GO:0046872">
    <property type="term" value="F:metal ion binding"/>
    <property type="evidence" value="ECO:0007669"/>
    <property type="project" value="UniProtKB-KW"/>
</dbReference>
<dbReference type="GO" id="GO:0015990">
    <property type="term" value="P:electron transport coupled proton transport"/>
    <property type="evidence" value="ECO:0007669"/>
    <property type="project" value="TreeGrafter"/>
</dbReference>
<dbReference type="GO" id="GO:0006123">
    <property type="term" value="P:mitochondrial electron transport, cytochrome c to oxygen"/>
    <property type="evidence" value="ECO:0007669"/>
    <property type="project" value="TreeGrafter"/>
</dbReference>
<dbReference type="CDD" id="cd01663">
    <property type="entry name" value="Cyt_c_Oxidase_I"/>
    <property type="match status" value="1"/>
</dbReference>
<dbReference type="FunFam" id="1.20.210.10:FF:000001">
    <property type="entry name" value="Cytochrome c oxidase subunit 1"/>
    <property type="match status" value="1"/>
</dbReference>
<dbReference type="Gene3D" id="1.20.210.10">
    <property type="entry name" value="Cytochrome c oxidase-like, subunit I domain"/>
    <property type="match status" value="1"/>
</dbReference>
<dbReference type="InterPro" id="IPR023616">
    <property type="entry name" value="Cyt_c_oxase-like_su1_dom"/>
</dbReference>
<dbReference type="InterPro" id="IPR036927">
    <property type="entry name" value="Cyt_c_oxase-like_su1_sf"/>
</dbReference>
<dbReference type="InterPro" id="IPR000883">
    <property type="entry name" value="Cyt_C_Oxase_1"/>
</dbReference>
<dbReference type="InterPro" id="IPR023615">
    <property type="entry name" value="Cyt_c_Oxase_su1_BS"/>
</dbReference>
<dbReference type="InterPro" id="IPR033944">
    <property type="entry name" value="Cyt_c_oxase_su1_dom"/>
</dbReference>
<dbReference type="PANTHER" id="PTHR10422">
    <property type="entry name" value="CYTOCHROME C OXIDASE SUBUNIT 1"/>
    <property type="match status" value="1"/>
</dbReference>
<dbReference type="PANTHER" id="PTHR10422:SF18">
    <property type="entry name" value="CYTOCHROME C OXIDASE SUBUNIT 1"/>
    <property type="match status" value="1"/>
</dbReference>
<dbReference type="Pfam" id="PF00115">
    <property type="entry name" value="COX1"/>
    <property type="match status" value="1"/>
</dbReference>
<dbReference type="PRINTS" id="PR01165">
    <property type="entry name" value="CYCOXIDASEI"/>
</dbReference>
<dbReference type="SUPFAM" id="SSF81442">
    <property type="entry name" value="Cytochrome c oxidase subunit I-like"/>
    <property type="match status" value="1"/>
</dbReference>
<dbReference type="PROSITE" id="PS50855">
    <property type="entry name" value="COX1"/>
    <property type="match status" value="1"/>
</dbReference>
<dbReference type="PROSITE" id="PS00077">
    <property type="entry name" value="COX1_CUB"/>
    <property type="match status" value="1"/>
</dbReference>
<protein>
    <recommendedName>
        <fullName>Cytochrome c oxidase subunit 1</fullName>
        <ecNumber>7.1.1.9</ecNumber>
    </recommendedName>
    <alternativeName>
        <fullName>Cytochrome c oxidase polypeptide I</fullName>
    </alternativeName>
</protein>
<name>COX1_COTJA</name>
<sequence length="516" mass="56985">MTFINRWLFSTNHKDIGTLYLIFGTWAGMAGTALSLLIRAELGQPGTLLGDDQIYNVIVTAHAFVMIFFMVMPIMIGGFGNWLVPLMIGAPDMAFPRMNNMSFWLLPPSFLLLLASSTVEAGAGTGWTVYPPLAGNLAHAGASVDLAIFSLHLAGVSSILGAINFITTIINMKPPALSQYQTPLFVWSVLITAILLLLSLPVLAAGITMLLTDRNLNTTFFDPAGGGDPILYQHLFWFFGHPEVYILILPGFGIISHVVAYYAGKKEPFGYMGMVWAMLSIGFLGFIVWAHHMFTVGMDVDTRAYFTSATMIIAIPTGIKVFSWLATLHGGTIKWDPPMLWALGFIFLFTIGGLTGIVLANSSLDIALHDTYYVVAHFHYVLSMGAVFAILAGFTHWFPLFTGFTLHPTWTKAHFGVMFTGVNLTFFPQHFLGLAGMPRRYSDYPDAYTLWNTLSSIGSLISMTAVIMLMFIVWEAFSAKRKVLQPELTATNIEWIHGCPPPYHTFEEPAFVQVQE</sequence>
<keyword id="KW-0106">Calcium</keyword>
<keyword id="KW-0186">Copper</keyword>
<keyword id="KW-0249">Electron transport</keyword>
<keyword id="KW-0349">Heme</keyword>
<keyword id="KW-0408">Iron</keyword>
<keyword id="KW-0460">Magnesium</keyword>
<keyword id="KW-0472">Membrane</keyword>
<keyword id="KW-0479">Metal-binding</keyword>
<keyword id="KW-0496">Mitochondrion</keyword>
<keyword id="KW-0999">Mitochondrion inner membrane</keyword>
<keyword id="KW-1185">Reference proteome</keyword>
<keyword id="KW-0679">Respiratory chain</keyword>
<keyword id="KW-0915">Sodium</keyword>
<keyword id="KW-1278">Translocase</keyword>
<keyword id="KW-0812">Transmembrane</keyword>
<keyword id="KW-1133">Transmembrane helix</keyword>
<keyword id="KW-0813">Transport</keyword>
<comment type="function">
    <text evidence="3">Component of the cytochrome c oxidase, the last enzyme in the mitochondrial electron transport chain which drives oxidative phosphorylation. The respiratory chain contains 3 multisubunit complexes succinate dehydrogenase (complex II, CII), ubiquinol-cytochrome c oxidoreductase (cytochrome b-c1 complex, complex III, CIII) and cytochrome c oxidase (complex IV, CIV), that cooperate to transfer electrons derived from NADH and succinate to molecular oxygen, creating an electrochemical gradient over the inner membrane that drives transmembrane transport and the ATP synthase. Cytochrome c oxidase is the component of the respiratory chain that catalyzes the reduction of oxygen to water. Electrons originating from reduced cytochrome c in the intermembrane space (IMS) are transferred via the dinuclear copper A center (CU(A)) of subunit 2 and heme A of subunit 1 to the active site in subunit 1, a binuclear center (BNC) formed by heme A3 and copper B (CU(B)). The BNC reduces molecular oxygen to 2 water molecules using 4 electrons from cytochrome c in the IMS and 4 protons from the mitochondrial matrix.</text>
</comment>
<comment type="catalytic activity">
    <reaction evidence="3">
        <text>4 Fe(II)-[cytochrome c] + O2 + 8 H(+)(in) = 4 Fe(III)-[cytochrome c] + 2 H2O + 4 H(+)(out)</text>
        <dbReference type="Rhea" id="RHEA:11436"/>
        <dbReference type="Rhea" id="RHEA-COMP:10350"/>
        <dbReference type="Rhea" id="RHEA-COMP:14399"/>
        <dbReference type="ChEBI" id="CHEBI:15377"/>
        <dbReference type="ChEBI" id="CHEBI:15378"/>
        <dbReference type="ChEBI" id="CHEBI:15379"/>
        <dbReference type="ChEBI" id="CHEBI:29033"/>
        <dbReference type="ChEBI" id="CHEBI:29034"/>
        <dbReference type="EC" id="7.1.1.9"/>
    </reaction>
    <physiologicalReaction direction="left-to-right" evidence="3">
        <dbReference type="Rhea" id="RHEA:11437"/>
    </physiologicalReaction>
</comment>
<comment type="cofactor">
    <cofactor evidence="2">
        <name>heme</name>
        <dbReference type="ChEBI" id="CHEBI:30413"/>
    </cofactor>
    <text evidence="2">Binds 2 heme A groups non-covalently per subunit.</text>
</comment>
<comment type="cofactor">
    <cofactor evidence="2">
        <name>Cu cation</name>
        <dbReference type="ChEBI" id="CHEBI:23378"/>
    </cofactor>
    <text evidence="2">Binds a copper B center.</text>
</comment>
<comment type="pathway">
    <text evidence="3">Energy metabolism; oxidative phosphorylation.</text>
</comment>
<comment type="subunit">
    <text evidence="1 2">Component of the cytochrome c oxidase (complex IV, CIV), a multisubunit enzyme composed of 14 subunits. The complex is composed of a catalytic core of 3 subunits MT-CO1, MT-CO2 and MT-CO3, encoded in the mitochondrial DNA, and 11 supernumerary subunits COX4I, COX5A, COX5B, COX6A, COX6B, COX6C, COX7A, COX7B, COX7C, COX8 and NDUFA4, which are encoded in the nuclear genome. The complex exists as a monomer or a dimer and forms supercomplexes (SCs) in the inner mitochondrial membrane with NADH-ubiquinone oxidoreductase (complex I, CI) and ubiquinol-cytochrome c oxidoreductase (cytochrome b-c1 complex, complex III, CIII), resulting in different assemblies (supercomplex SCI(1)III(2)IV(1) and megacomplex MCI(2)III(2)IV(2)) (By similarity). As a newly synthesized protein, rapidly incorporates into a multi-subunit assembly intermediate in the inner membrane, called MITRAC (mitochondrial translation regulation assembly intermediate of cytochrome c oxidase) complex, whose core components are COA3/MITRAC12 and COX14. Within the MITRAC complex, interacts with COA3 and with SMIM20/MITRAC7; the interaction with SMIM20 stabilizes the newly synthesized MT-CO1 and prevents its premature turnover. Interacts with TMEM177 in a COX20-dependent manner (By similarity).</text>
</comment>
<comment type="subcellular location">
    <subcellularLocation>
        <location evidence="2">Mitochondrion inner membrane</location>
        <topology evidence="2">Multi-pass membrane protein</topology>
    </subcellularLocation>
</comment>
<comment type="similarity">
    <text evidence="4">Belongs to the heme-copper respiratory oxidase family.</text>
</comment>
<accession>P24984</accession>
<accession>Q8SEX1</accession>
<gene>
    <name type="primary">MT-CO1</name>
    <name type="synonym">COI</name>
    <name type="synonym">COXI</name>
    <name type="synonym">MTCO1</name>
</gene>
<reference key="1">
    <citation type="journal article" date="2001" name="Anim. Genet.">
        <title>Complete sequence of the Japanese quail (Coturnix japonica) mitochondrial genome and its genetic relationship with related species.</title>
        <authorList>
            <person name="Nishibori M."/>
            <person name="Hayashi T."/>
            <person name="Tsudzuki M."/>
            <person name="Yamamoto Y."/>
            <person name="Yasue H."/>
        </authorList>
    </citation>
    <scope>NUCLEOTIDE SEQUENCE [GENOMIC DNA]</scope>
    <source>
        <tissue>Blood</tissue>
    </source>
</reference>
<reference key="2">
    <citation type="journal article" date="1991" name="J. Mol. Evol.">
        <title>Nucleotide sequence and evolution of coding and noncoding regions of a quail mitochondrial genome.</title>
        <authorList>
            <person name="Desjardins P."/>
            <person name="Morais R."/>
        </authorList>
    </citation>
    <scope>NUCLEOTIDE SEQUENCE [GENOMIC DNA] OF 1-102</scope>
    <source>
        <tissue>Liver</tissue>
    </source>
</reference>
<reference key="3">
    <citation type="submission" date="1995-09" db="EMBL/GenBank/DDBJ databases">
        <title>Nucleotide sequence of mitochondrial genes for COI, tRNAs Lys, Asp, Ser (UCN), COII and ATPases 8 and 6 of the quail Coturnix japonica.</title>
        <authorList>
            <person name="Ramirez V."/>
            <person name="Morais R."/>
        </authorList>
    </citation>
    <scope>NUCLEOTIDE SEQUENCE [GENOMIC DNA] OF 463-516</scope>
    <source>
        <tissue>Liver</tissue>
    </source>
</reference>